<feature type="signal peptide" evidence="2">
    <location>
        <begin position="1"/>
        <end position="23"/>
    </location>
</feature>
<feature type="chain" id="PRO_0000106429" description="Cellulose synthase operon protein C">
    <location>
        <begin position="24"/>
        <end position="1157"/>
    </location>
</feature>
<feature type="repeat" description="TPR 1">
    <location>
        <begin position="62"/>
        <end position="95"/>
    </location>
</feature>
<feature type="repeat" description="TPR 2">
    <location>
        <begin position="112"/>
        <end position="145"/>
    </location>
</feature>
<feature type="repeat" description="TPR 3">
    <location>
        <begin position="269"/>
        <end position="302"/>
    </location>
</feature>
<feature type="repeat" description="TPR 4">
    <location>
        <begin position="303"/>
        <end position="336"/>
    </location>
</feature>
<feature type="repeat" description="TPR 5">
    <location>
        <begin position="351"/>
        <end position="384"/>
    </location>
</feature>
<feature type="repeat" description="TPR 6">
    <location>
        <begin position="385"/>
        <end position="418"/>
    </location>
</feature>
<feature type="repeat" description="TPR 7">
    <location>
        <begin position="461"/>
        <end position="494"/>
    </location>
</feature>
<feature type="repeat" description="TPR 8">
    <location>
        <begin position="603"/>
        <end position="636"/>
    </location>
</feature>
<feature type="repeat" description="TPR 9">
    <location>
        <begin position="710"/>
        <end position="744"/>
    </location>
</feature>
<feature type="sequence conflict" description="In Ref. 1; AAB18507." evidence="3" ref="1">
    <original>AM</original>
    <variation>V</variation>
    <location>
        <begin position="594"/>
        <end position="595"/>
    </location>
</feature>
<feature type="helix" evidence="4">
    <location>
        <begin position="710"/>
        <end position="723"/>
    </location>
</feature>
<feature type="helix" evidence="4">
    <location>
        <begin position="727"/>
        <end position="740"/>
    </location>
</feature>
<feature type="helix" evidence="4">
    <location>
        <begin position="751"/>
        <end position="756"/>
    </location>
</feature>
<feature type="helix" evidence="4">
    <location>
        <begin position="766"/>
        <end position="782"/>
    </location>
</feature>
<feature type="strand" evidence="4">
    <location>
        <begin position="785"/>
        <end position="795"/>
    </location>
</feature>
<feature type="turn" evidence="4">
    <location>
        <begin position="799"/>
        <end position="801"/>
    </location>
</feature>
<feature type="strand" evidence="4">
    <location>
        <begin position="804"/>
        <end position="817"/>
    </location>
</feature>
<feature type="strand" evidence="4">
    <location>
        <begin position="820"/>
        <end position="835"/>
    </location>
</feature>
<feature type="strand" evidence="4">
    <location>
        <begin position="847"/>
        <end position="849"/>
    </location>
</feature>
<feature type="turn" evidence="4">
    <location>
        <begin position="850"/>
        <end position="853"/>
    </location>
</feature>
<feature type="strand" evidence="4">
    <location>
        <begin position="861"/>
        <end position="874"/>
    </location>
</feature>
<feature type="strand" evidence="4">
    <location>
        <begin position="876"/>
        <end position="885"/>
    </location>
</feature>
<feature type="strand" evidence="4">
    <location>
        <begin position="889"/>
        <end position="891"/>
    </location>
</feature>
<feature type="strand" evidence="4">
    <location>
        <begin position="894"/>
        <end position="906"/>
    </location>
</feature>
<feature type="strand" evidence="4">
    <location>
        <begin position="908"/>
        <end position="917"/>
    </location>
</feature>
<feature type="helix" evidence="4">
    <location>
        <begin position="922"/>
        <end position="925"/>
    </location>
</feature>
<feature type="turn" evidence="4">
    <location>
        <begin position="932"/>
        <end position="935"/>
    </location>
</feature>
<feature type="strand" evidence="4">
    <location>
        <begin position="938"/>
        <end position="952"/>
    </location>
</feature>
<feature type="strand" evidence="4">
    <location>
        <begin position="959"/>
        <end position="973"/>
    </location>
</feature>
<feature type="strand" evidence="4">
    <location>
        <begin position="975"/>
        <end position="993"/>
    </location>
</feature>
<feature type="strand" evidence="4">
    <location>
        <begin position="995"/>
        <end position="1012"/>
    </location>
</feature>
<feature type="strand" evidence="4">
    <location>
        <begin position="1016"/>
        <end position="1018"/>
    </location>
</feature>
<feature type="strand" evidence="4">
    <location>
        <begin position="1028"/>
        <end position="1042"/>
    </location>
</feature>
<feature type="strand" evidence="4">
    <location>
        <begin position="1044"/>
        <end position="1061"/>
    </location>
</feature>
<feature type="strand" evidence="4">
    <location>
        <begin position="1064"/>
        <end position="1066"/>
    </location>
</feature>
<feature type="helix" evidence="4">
    <location>
        <begin position="1070"/>
        <end position="1072"/>
    </location>
</feature>
<feature type="helix" evidence="4">
    <location>
        <begin position="1075"/>
        <end position="1082"/>
    </location>
</feature>
<feature type="strand" evidence="4">
    <location>
        <begin position="1089"/>
        <end position="1123"/>
    </location>
</feature>
<feature type="strand" evidence="4">
    <location>
        <begin position="1127"/>
        <end position="1138"/>
    </location>
</feature>
<feature type="helix" evidence="4">
    <location>
        <begin position="1154"/>
        <end position="1156"/>
    </location>
</feature>
<evidence type="ECO:0000250" key="1"/>
<evidence type="ECO:0000255" key="2"/>
<evidence type="ECO:0000305" key="3"/>
<evidence type="ECO:0007829" key="4">
    <source>
        <dbReference type="PDB" id="6TZK"/>
    </source>
</evidence>
<sequence length="1157" mass="127724">MRKFTLNIFTLSLGLAVMPMVEAAPTAQQQLLEQVRLGEATHREDLVQQSLYRLELIDPNNPDVVAARFRSLLRQGDIDGAQKQLDRLSQLAPSSNAYKSSRTTMLLSTPDGRQALQQARLQATTGHAEEAVASYNKLFNGAPPEGDIAVEYWSTVAKIPARRGEAINQLKRINADAPGNTGLQNNLALLLFSSDRRDEGFAVLEQMAKSNAGREGASKIWYGQIKDMPVSDASVSALKKYLSIFSDGDSVAAAQSQLAEQQKQLADPAFRARAQGLAAVDSGMAGKAIPELQQAVRANPKDSEALGALGQAYSQKGDRANAVANLEKALALDPHSSNNDKWNSLLKVNRYWLAIQQGDAALKANNPDRAERLFQQARNVDNTDSYAVLGLGDVAMARKDYPAAERYYQQTLRMDSGNTNAVRGLANIYRQQSPEKAEAFIASLSASQRRSIDDIERSLQNDRLAQQAEALENQGKWAQAAALQRQRLALDPGSVWITYRLSQDLWQAGQRSQADTLMRNLAQQKSNDPEQVYAYGLYLSGHDQDRAALAHINSLPRAQWNSNIQELVNRLQSDQVLETANRLRESGKEAEAEAMLRQQPPSTRIDLTLADWAQQRRDYTAARAAYQNVLTREPANADAILGLTEVDIAAGDKAAARSQLAKLPATDNASLNTQRRVALAQAQLGDTAAAQRTFNKLIPQAKSQPPSMESAMVLRDGAKFEAQAGDPTQALETYKDAMVASGVTTTRPQDNDTFTRLTRNDEKDDWLKRGVRSDAADLYRQQDLNVTLEHDYWGSSGTGGYSDLKAHTTMLQVDAPYSDGRMFFRSDFVNMNVGSFSTNADGKWDDNWGTCTLQDCSGNRSQSDSGASVAVGWRNDVWSWDIGTTPMGFNVVDVVGGISYSDDIGPLGYTVNAHRRPISSSLLAFGGQKDSPSNTGKKWGGVRADGVGLSLSYDKGEANGVWASLSGDQLTGKNVEDNWRVRWMTGYYYKVINQNNRRVTIGLNNMIWHYDKDLSGYSLGQGGYYSPQEYLSFAIPVMWRERTENWSWELGASGSWSHSRTKTMPRYPLMNLIPTDWQEEAARQSNDGGSSQGFGYTARALLERRVTSNWFVGTAIDIQQAKDYAPSHFLLYVRYSAAGWQGDMDLPPQPLIPYADW</sequence>
<gene>
    <name type="primary">bcsC</name>
    <name type="synonym">yhjL</name>
    <name type="ordered locus">b3530</name>
    <name type="ordered locus">JW5942</name>
</gene>
<proteinExistence type="evidence at protein level"/>
<accession>P37650</accession>
<accession>P76710</accession>
<accession>Q2M7J2</accession>
<comment type="function">
    <text evidence="1">Required for maximal bacterial cellulose synthesis.</text>
</comment>
<comment type="pathway">
    <text>Glycan metabolism; bacterial cellulose biosynthesis.</text>
</comment>
<comment type="miscellaneous">
    <text>The genes bscA, bcsB, bcsZ and bcsC are constitutively transcribed but cellulose synthesis occurs only when DgcC, a putative transmembrane protein regulated by CsgD, is expressed. Cellulose production is abolished in E.coli K12.</text>
</comment>
<comment type="similarity">
    <text evidence="3">Belongs to the AcsC/BcsC family.</text>
</comment>
<comment type="sequence caution" evidence="3">
    <conflict type="frameshift">
        <sequence resource="EMBL-CDS" id="AAB18507"/>
    </conflict>
</comment>
<reference key="1">
    <citation type="journal article" date="1994" name="Nucleic Acids Res.">
        <title>Analysis of the Escherichia coli genome. V. DNA sequence of the region from 76.0 to 81.5 minutes.</title>
        <authorList>
            <person name="Sofia H.J."/>
            <person name="Burland V."/>
            <person name="Daniels D.L."/>
            <person name="Plunkett G. III"/>
            <person name="Blattner F.R."/>
        </authorList>
    </citation>
    <scope>NUCLEOTIDE SEQUENCE [LARGE SCALE GENOMIC DNA]</scope>
    <source>
        <strain>K12 / MG1655 / ATCC 47076</strain>
    </source>
</reference>
<reference key="2">
    <citation type="journal article" date="1997" name="Science">
        <title>The complete genome sequence of Escherichia coli K-12.</title>
        <authorList>
            <person name="Blattner F.R."/>
            <person name="Plunkett G. III"/>
            <person name="Bloch C.A."/>
            <person name="Perna N.T."/>
            <person name="Burland V."/>
            <person name="Riley M."/>
            <person name="Collado-Vides J."/>
            <person name="Glasner J.D."/>
            <person name="Rode C.K."/>
            <person name="Mayhew G.F."/>
            <person name="Gregor J."/>
            <person name="Davis N.W."/>
            <person name="Kirkpatrick H.A."/>
            <person name="Goeden M.A."/>
            <person name="Rose D.J."/>
            <person name="Mau B."/>
            <person name="Shao Y."/>
        </authorList>
    </citation>
    <scope>NUCLEOTIDE SEQUENCE [LARGE SCALE GENOMIC DNA]</scope>
    <scope>SEQUENCE REVISION TO 594-595</scope>
    <source>
        <strain>K12 / MG1655 / ATCC 47076</strain>
    </source>
</reference>
<reference key="3">
    <citation type="journal article" date="2006" name="Mol. Syst. Biol.">
        <title>Highly accurate genome sequences of Escherichia coli K-12 strains MG1655 and W3110.</title>
        <authorList>
            <person name="Hayashi K."/>
            <person name="Morooka N."/>
            <person name="Yamamoto Y."/>
            <person name="Fujita K."/>
            <person name="Isono K."/>
            <person name="Choi S."/>
            <person name="Ohtsubo E."/>
            <person name="Baba T."/>
            <person name="Wanner B.L."/>
            <person name="Mori H."/>
            <person name="Horiuchi T."/>
        </authorList>
    </citation>
    <scope>NUCLEOTIDE SEQUENCE [LARGE SCALE GENOMIC DNA]</scope>
    <source>
        <strain>K12 / W3110 / ATCC 27325 / DSM 5911</strain>
    </source>
</reference>
<reference key="4">
    <citation type="journal article" date="2001" name="Mol. Microbiol.">
        <title>The multicellular morphotypes of Salmonella typhimurium and Escherichia coli produce cellulose as the second component of the extracellular matrix.</title>
        <authorList>
            <person name="Zogaj X."/>
            <person name="Nimtz M."/>
            <person name="Rohde M."/>
            <person name="Bokranz W."/>
            <person name="Roemling U."/>
        </authorList>
    </citation>
    <scope>CHARACTERIZATION</scope>
    <source>
        <strain>ECOR 10</strain>
        <strain>ECOR 12</strain>
        <strain>TOB1</strain>
    </source>
</reference>
<dbReference type="EMBL" id="U00039">
    <property type="protein sequence ID" value="AAB18507.1"/>
    <property type="status" value="ALT_FRAME"/>
    <property type="molecule type" value="Genomic_DNA"/>
</dbReference>
<dbReference type="EMBL" id="U00096">
    <property type="protein sequence ID" value="AAT48188.4"/>
    <property type="molecule type" value="Genomic_DNA"/>
</dbReference>
<dbReference type="EMBL" id="AP009048">
    <property type="protein sequence ID" value="BAE77764.1"/>
    <property type="molecule type" value="Genomic_DNA"/>
</dbReference>
<dbReference type="RefSeq" id="WP_001225124.1">
    <property type="nucleotide sequence ID" value="NZ_SSZK01000039.1"/>
</dbReference>
<dbReference type="RefSeq" id="YP_026226.4">
    <property type="nucleotide sequence ID" value="NC_000913.3"/>
</dbReference>
<dbReference type="PDB" id="6TZK">
    <property type="method" value="X-ray"/>
    <property type="resolution" value="1.85 A"/>
    <property type="chains" value="A=710-1157"/>
</dbReference>
<dbReference type="PDB" id="9B8A">
    <property type="method" value="EM"/>
    <property type="resolution" value="3.40 A"/>
    <property type="chains" value="A=21-1157"/>
</dbReference>
<dbReference type="PDB" id="9B8H">
    <property type="method" value="EM"/>
    <property type="resolution" value="3.80 A"/>
    <property type="chains" value="A=21-1157"/>
</dbReference>
<dbReference type="PDB" id="9B8I">
    <property type="method" value="EM"/>
    <property type="resolution" value="3.18 A"/>
    <property type="chains" value="C=21-179"/>
</dbReference>
<dbReference type="PDBsum" id="6TZK"/>
<dbReference type="PDBsum" id="9B8A"/>
<dbReference type="PDBsum" id="9B8H"/>
<dbReference type="PDBsum" id="9B8I"/>
<dbReference type="EMDB" id="EMD-44336"/>
<dbReference type="EMDB" id="EMD-44345"/>
<dbReference type="SMR" id="P37650"/>
<dbReference type="BioGRID" id="4261634">
    <property type="interactions" value="123"/>
</dbReference>
<dbReference type="FunCoup" id="P37650">
    <property type="interactions" value="101"/>
</dbReference>
<dbReference type="STRING" id="511145.b3530"/>
<dbReference type="TCDB" id="1.B.55.3.1">
    <property type="family name" value="the poly acetyl glucosamine porin (pgaa) family"/>
</dbReference>
<dbReference type="PaxDb" id="511145-b3530"/>
<dbReference type="EnsemblBacteria" id="AAT48188">
    <property type="protein sequence ID" value="AAT48188"/>
    <property type="gene ID" value="b3530"/>
</dbReference>
<dbReference type="GeneID" id="948047"/>
<dbReference type="KEGG" id="ecj:JW5942"/>
<dbReference type="KEGG" id="eco:b3530"/>
<dbReference type="KEGG" id="ecoc:C3026_19125"/>
<dbReference type="PATRIC" id="fig|511145.12.peg.3641"/>
<dbReference type="EchoBASE" id="EB2166"/>
<dbReference type="eggNOG" id="COG0457">
    <property type="taxonomic scope" value="Bacteria"/>
</dbReference>
<dbReference type="eggNOG" id="COG3118">
    <property type="taxonomic scope" value="Bacteria"/>
</dbReference>
<dbReference type="HOGENOM" id="CLU_001631_2_0_6"/>
<dbReference type="InParanoid" id="P37650"/>
<dbReference type="OMA" id="GWLPAYK"/>
<dbReference type="OrthoDB" id="174989at2"/>
<dbReference type="PhylomeDB" id="P37650"/>
<dbReference type="BioCyc" id="EcoCyc:EG12257-MONOMER"/>
<dbReference type="UniPathway" id="UPA00694"/>
<dbReference type="PRO" id="PR:P37650"/>
<dbReference type="Proteomes" id="UP000000625">
    <property type="component" value="Chromosome"/>
</dbReference>
<dbReference type="GO" id="GO:0009279">
    <property type="term" value="C:cell outer membrane"/>
    <property type="evidence" value="ECO:0007005"/>
    <property type="project" value="EcoCyc"/>
</dbReference>
<dbReference type="GO" id="GO:0030244">
    <property type="term" value="P:cellulose biosynthetic process"/>
    <property type="evidence" value="ECO:0007669"/>
    <property type="project" value="UniProtKB-KW"/>
</dbReference>
<dbReference type="Gene3D" id="1.25.40.10">
    <property type="entry name" value="Tetratricopeptide repeat domain"/>
    <property type="match status" value="5"/>
</dbReference>
<dbReference type="InterPro" id="IPR008410">
    <property type="entry name" value="BCSC_C"/>
</dbReference>
<dbReference type="InterPro" id="IPR011990">
    <property type="entry name" value="TPR-like_helical_dom_sf"/>
</dbReference>
<dbReference type="InterPro" id="IPR019734">
    <property type="entry name" value="TPR_rpt"/>
</dbReference>
<dbReference type="InterPro" id="IPR051685">
    <property type="entry name" value="Ycf3/AcsC/BcsC/TPR_MFPF"/>
</dbReference>
<dbReference type="NCBIfam" id="NF008520">
    <property type="entry name" value="PRK11447.1"/>
    <property type="match status" value="1"/>
</dbReference>
<dbReference type="PANTHER" id="PTHR44943">
    <property type="entry name" value="CELLULOSE SYNTHASE OPERON PROTEIN C"/>
    <property type="match status" value="1"/>
</dbReference>
<dbReference type="PANTHER" id="PTHR44943:SF11">
    <property type="entry name" value="CELLULOSE SYNTHASE OPERON PROTEIN C"/>
    <property type="match status" value="1"/>
</dbReference>
<dbReference type="Pfam" id="PF05420">
    <property type="entry name" value="BCSC_C"/>
    <property type="match status" value="1"/>
</dbReference>
<dbReference type="Pfam" id="PF13432">
    <property type="entry name" value="TPR_16"/>
    <property type="match status" value="2"/>
</dbReference>
<dbReference type="Pfam" id="PF14559">
    <property type="entry name" value="TPR_19"/>
    <property type="match status" value="1"/>
</dbReference>
<dbReference type="SMART" id="SM00028">
    <property type="entry name" value="TPR"/>
    <property type="match status" value="6"/>
</dbReference>
<dbReference type="SUPFAM" id="SSF48452">
    <property type="entry name" value="TPR-like"/>
    <property type="match status" value="4"/>
</dbReference>
<dbReference type="PROSITE" id="PS50005">
    <property type="entry name" value="TPR"/>
    <property type="match status" value="6"/>
</dbReference>
<dbReference type="PROSITE" id="PS50293">
    <property type="entry name" value="TPR_REGION"/>
    <property type="match status" value="2"/>
</dbReference>
<organism>
    <name type="scientific">Escherichia coli (strain K12)</name>
    <dbReference type="NCBI Taxonomy" id="83333"/>
    <lineage>
        <taxon>Bacteria</taxon>
        <taxon>Pseudomonadati</taxon>
        <taxon>Pseudomonadota</taxon>
        <taxon>Gammaproteobacteria</taxon>
        <taxon>Enterobacterales</taxon>
        <taxon>Enterobacteriaceae</taxon>
        <taxon>Escherichia</taxon>
    </lineage>
</organism>
<name>BCSC_ECOLI</name>
<keyword id="KW-0002">3D-structure</keyword>
<keyword id="KW-0135">Cellulose biosynthesis</keyword>
<keyword id="KW-1185">Reference proteome</keyword>
<keyword id="KW-0677">Repeat</keyword>
<keyword id="KW-0732">Signal</keyword>
<keyword id="KW-0802">TPR repeat</keyword>
<protein>
    <recommendedName>
        <fullName>Cellulose synthase operon protein C</fullName>
    </recommendedName>
</protein>